<feature type="chain" id="PRO_0000386280" description="GTPase Obg">
    <location>
        <begin position="1"/>
        <end position="430"/>
    </location>
</feature>
<feature type="domain" description="Obg" evidence="3">
    <location>
        <begin position="1"/>
        <end position="158"/>
    </location>
</feature>
<feature type="domain" description="OBG-type G" evidence="1">
    <location>
        <begin position="159"/>
        <end position="329"/>
    </location>
</feature>
<feature type="domain" description="OCT" evidence="2">
    <location>
        <begin position="352"/>
        <end position="430"/>
    </location>
</feature>
<feature type="region of interest" description="Disordered" evidence="4">
    <location>
        <begin position="118"/>
        <end position="145"/>
    </location>
</feature>
<feature type="binding site" evidence="1">
    <location>
        <begin position="165"/>
        <end position="172"/>
    </location>
    <ligand>
        <name>GTP</name>
        <dbReference type="ChEBI" id="CHEBI:37565"/>
    </ligand>
</feature>
<feature type="binding site" evidence="1">
    <location>
        <position position="172"/>
    </location>
    <ligand>
        <name>Mg(2+)</name>
        <dbReference type="ChEBI" id="CHEBI:18420"/>
    </ligand>
</feature>
<feature type="binding site" evidence="1">
    <location>
        <begin position="190"/>
        <end position="194"/>
    </location>
    <ligand>
        <name>GTP</name>
        <dbReference type="ChEBI" id="CHEBI:37565"/>
    </ligand>
</feature>
<feature type="binding site" evidence="1">
    <location>
        <position position="192"/>
    </location>
    <ligand>
        <name>Mg(2+)</name>
        <dbReference type="ChEBI" id="CHEBI:18420"/>
    </ligand>
</feature>
<feature type="binding site" evidence="1">
    <location>
        <begin position="212"/>
        <end position="215"/>
    </location>
    <ligand>
        <name>GTP</name>
        <dbReference type="ChEBI" id="CHEBI:37565"/>
    </ligand>
</feature>
<feature type="binding site" evidence="1">
    <location>
        <begin position="282"/>
        <end position="285"/>
    </location>
    <ligand>
        <name>GTP</name>
        <dbReference type="ChEBI" id="CHEBI:37565"/>
    </ligand>
</feature>
<feature type="binding site" evidence="1">
    <location>
        <begin position="310"/>
        <end position="312"/>
    </location>
    <ligand>
        <name>GTP</name>
        <dbReference type="ChEBI" id="CHEBI:37565"/>
    </ligand>
</feature>
<comment type="function">
    <text evidence="1">An essential GTPase which binds GTP, GDP and possibly (p)ppGpp with moderate affinity, with high nucleotide exchange rates and a fairly low GTP hydrolysis rate. Plays a role in control of the cell cycle, stress response, ribosome biogenesis and in those bacteria that undergo differentiation, in morphogenesis control.</text>
</comment>
<comment type="cofactor">
    <cofactor evidence="1">
        <name>Mg(2+)</name>
        <dbReference type="ChEBI" id="CHEBI:18420"/>
    </cofactor>
</comment>
<comment type="subunit">
    <text evidence="1">Monomer.</text>
</comment>
<comment type="subcellular location">
    <subcellularLocation>
        <location evidence="1">Cytoplasm</location>
    </subcellularLocation>
</comment>
<comment type="similarity">
    <text evidence="1">Belongs to the TRAFAC class OBG-HflX-like GTPase superfamily. OBG GTPase family.</text>
</comment>
<protein>
    <recommendedName>
        <fullName evidence="1">GTPase Obg</fullName>
        <ecNumber evidence="1">3.6.5.-</ecNumber>
    </recommendedName>
    <alternativeName>
        <fullName evidence="1">GTP-binding protein Obg</fullName>
    </alternativeName>
</protein>
<reference key="1">
    <citation type="journal article" date="2007" name="BMC Microbiol.">
        <title>Subtle genetic changes enhance virulence of methicillin resistant and sensitive Staphylococcus aureus.</title>
        <authorList>
            <person name="Highlander S.K."/>
            <person name="Hulten K.G."/>
            <person name="Qin X."/>
            <person name="Jiang H."/>
            <person name="Yerrapragada S."/>
            <person name="Mason E.O. Jr."/>
            <person name="Shang Y."/>
            <person name="Williams T.M."/>
            <person name="Fortunov R.M."/>
            <person name="Liu Y."/>
            <person name="Igboeli O."/>
            <person name="Petrosino J."/>
            <person name="Tirumalai M."/>
            <person name="Uzman A."/>
            <person name="Fox G.E."/>
            <person name="Cardenas A.M."/>
            <person name="Muzny D.M."/>
            <person name="Hemphill L."/>
            <person name="Ding Y."/>
            <person name="Dugan S."/>
            <person name="Blyth P.R."/>
            <person name="Buhay C.J."/>
            <person name="Dinh H.H."/>
            <person name="Hawes A.C."/>
            <person name="Holder M."/>
            <person name="Kovar C.L."/>
            <person name="Lee S.L."/>
            <person name="Liu W."/>
            <person name="Nazareth L.V."/>
            <person name="Wang Q."/>
            <person name="Zhou J."/>
            <person name="Kaplan S.L."/>
            <person name="Weinstock G.M."/>
        </authorList>
    </citation>
    <scope>NUCLEOTIDE SEQUENCE [LARGE SCALE GENOMIC DNA]</scope>
    <source>
        <strain>USA300 / TCH1516</strain>
    </source>
</reference>
<name>OBG_STAAT</name>
<dbReference type="EC" id="3.6.5.-" evidence="1"/>
<dbReference type="EMBL" id="CP000730">
    <property type="protein sequence ID" value="ABX29650.1"/>
    <property type="molecule type" value="Genomic_DNA"/>
</dbReference>
<dbReference type="SMR" id="A8Z2H2"/>
<dbReference type="KEGG" id="sax:USA300HOU_1643"/>
<dbReference type="HOGENOM" id="CLU_011747_2_1_9"/>
<dbReference type="GO" id="GO:0005737">
    <property type="term" value="C:cytoplasm"/>
    <property type="evidence" value="ECO:0007669"/>
    <property type="project" value="UniProtKB-SubCell"/>
</dbReference>
<dbReference type="GO" id="GO:0005525">
    <property type="term" value="F:GTP binding"/>
    <property type="evidence" value="ECO:0007669"/>
    <property type="project" value="UniProtKB-UniRule"/>
</dbReference>
<dbReference type="GO" id="GO:0003924">
    <property type="term" value="F:GTPase activity"/>
    <property type="evidence" value="ECO:0007669"/>
    <property type="project" value="UniProtKB-UniRule"/>
</dbReference>
<dbReference type="GO" id="GO:0000287">
    <property type="term" value="F:magnesium ion binding"/>
    <property type="evidence" value="ECO:0007669"/>
    <property type="project" value="InterPro"/>
</dbReference>
<dbReference type="GO" id="GO:0042254">
    <property type="term" value="P:ribosome biogenesis"/>
    <property type="evidence" value="ECO:0007669"/>
    <property type="project" value="UniProtKB-UniRule"/>
</dbReference>
<dbReference type="CDD" id="cd01898">
    <property type="entry name" value="Obg"/>
    <property type="match status" value="1"/>
</dbReference>
<dbReference type="FunFam" id="2.70.210.12:FF:000001">
    <property type="entry name" value="GTPase Obg"/>
    <property type="match status" value="1"/>
</dbReference>
<dbReference type="FunFam" id="3.40.50.300:FF:000515">
    <property type="entry name" value="GTPase Obg"/>
    <property type="match status" value="1"/>
</dbReference>
<dbReference type="Gene3D" id="3.30.300.350">
    <property type="entry name" value="GTP-binding protein OBG, C-terminal domain"/>
    <property type="match status" value="1"/>
</dbReference>
<dbReference type="Gene3D" id="2.70.210.12">
    <property type="entry name" value="GTP1/OBG domain"/>
    <property type="match status" value="1"/>
</dbReference>
<dbReference type="Gene3D" id="3.40.50.300">
    <property type="entry name" value="P-loop containing nucleotide triphosphate hydrolases"/>
    <property type="match status" value="1"/>
</dbReference>
<dbReference type="HAMAP" id="MF_01454">
    <property type="entry name" value="GTPase_Obg"/>
    <property type="match status" value="1"/>
</dbReference>
<dbReference type="InterPro" id="IPR031167">
    <property type="entry name" value="G_OBG"/>
</dbReference>
<dbReference type="InterPro" id="IPR006073">
    <property type="entry name" value="GTP-bd"/>
</dbReference>
<dbReference type="InterPro" id="IPR014100">
    <property type="entry name" value="GTP-bd_Obg/CgtA"/>
</dbReference>
<dbReference type="InterPro" id="IPR036346">
    <property type="entry name" value="GTP-bd_prot_GTP1/OBG_C_sf"/>
</dbReference>
<dbReference type="InterPro" id="IPR006074">
    <property type="entry name" value="GTP1-OBG_CS"/>
</dbReference>
<dbReference type="InterPro" id="IPR006169">
    <property type="entry name" value="GTP1_OBG_dom"/>
</dbReference>
<dbReference type="InterPro" id="IPR036726">
    <property type="entry name" value="GTP1_OBG_dom_sf"/>
</dbReference>
<dbReference type="InterPro" id="IPR045086">
    <property type="entry name" value="OBG_GTPase"/>
</dbReference>
<dbReference type="InterPro" id="IPR015349">
    <property type="entry name" value="OCT_dom"/>
</dbReference>
<dbReference type="InterPro" id="IPR027417">
    <property type="entry name" value="P-loop_NTPase"/>
</dbReference>
<dbReference type="NCBIfam" id="TIGR02729">
    <property type="entry name" value="Obg_CgtA"/>
    <property type="match status" value="1"/>
</dbReference>
<dbReference type="NCBIfam" id="TIGR03595">
    <property type="entry name" value="Obg_CgtA_exten"/>
    <property type="match status" value="1"/>
</dbReference>
<dbReference type="NCBIfam" id="NF008954">
    <property type="entry name" value="PRK12296.1"/>
    <property type="match status" value="1"/>
</dbReference>
<dbReference type="NCBIfam" id="NF008955">
    <property type="entry name" value="PRK12297.1"/>
    <property type="match status" value="1"/>
</dbReference>
<dbReference type="NCBIfam" id="NF008956">
    <property type="entry name" value="PRK12299.1"/>
    <property type="match status" value="1"/>
</dbReference>
<dbReference type="PANTHER" id="PTHR11702">
    <property type="entry name" value="DEVELOPMENTALLY REGULATED GTP-BINDING PROTEIN-RELATED"/>
    <property type="match status" value="1"/>
</dbReference>
<dbReference type="PANTHER" id="PTHR11702:SF31">
    <property type="entry name" value="MITOCHONDRIAL RIBOSOME-ASSOCIATED GTPASE 2"/>
    <property type="match status" value="1"/>
</dbReference>
<dbReference type="Pfam" id="PF09269">
    <property type="entry name" value="DUF1967"/>
    <property type="match status" value="1"/>
</dbReference>
<dbReference type="Pfam" id="PF01018">
    <property type="entry name" value="GTP1_OBG"/>
    <property type="match status" value="1"/>
</dbReference>
<dbReference type="Pfam" id="PF01926">
    <property type="entry name" value="MMR_HSR1"/>
    <property type="match status" value="1"/>
</dbReference>
<dbReference type="PIRSF" id="PIRSF002401">
    <property type="entry name" value="GTP_bd_Obg/CgtA"/>
    <property type="match status" value="1"/>
</dbReference>
<dbReference type="PRINTS" id="PR00326">
    <property type="entry name" value="GTP1OBG"/>
</dbReference>
<dbReference type="SUPFAM" id="SSF102741">
    <property type="entry name" value="Obg GTP-binding protein C-terminal domain"/>
    <property type="match status" value="1"/>
</dbReference>
<dbReference type="SUPFAM" id="SSF82051">
    <property type="entry name" value="Obg GTP-binding protein N-terminal domain"/>
    <property type="match status" value="1"/>
</dbReference>
<dbReference type="SUPFAM" id="SSF52540">
    <property type="entry name" value="P-loop containing nucleoside triphosphate hydrolases"/>
    <property type="match status" value="1"/>
</dbReference>
<dbReference type="PROSITE" id="PS51710">
    <property type="entry name" value="G_OBG"/>
    <property type="match status" value="1"/>
</dbReference>
<dbReference type="PROSITE" id="PS00905">
    <property type="entry name" value="GTP1_OBG"/>
    <property type="match status" value="1"/>
</dbReference>
<dbReference type="PROSITE" id="PS51883">
    <property type="entry name" value="OBG"/>
    <property type="match status" value="1"/>
</dbReference>
<dbReference type="PROSITE" id="PS51881">
    <property type="entry name" value="OCT"/>
    <property type="match status" value="1"/>
</dbReference>
<accession>A8Z2H2</accession>
<organism>
    <name type="scientific">Staphylococcus aureus (strain USA300 / TCH1516)</name>
    <dbReference type="NCBI Taxonomy" id="451516"/>
    <lineage>
        <taxon>Bacteria</taxon>
        <taxon>Bacillati</taxon>
        <taxon>Bacillota</taxon>
        <taxon>Bacilli</taxon>
        <taxon>Bacillales</taxon>
        <taxon>Staphylococcaceae</taxon>
        <taxon>Staphylococcus</taxon>
    </lineage>
</organism>
<evidence type="ECO:0000255" key="1">
    <source>
        <dbReference type="HAMAP-Rule" id="MF_01454"/>
    </source>
</evidence>
<evidence type="ECO:0000255" key="2">
    <source>
        <dbReference type="PROSITE-ProRule" id="PRU01229"/>
    </source>
</evidence>
<evidence type="ECO:0000255" key="3">
    <source>
        <dbReference type="PROSITE-ProRule" id="PRU01231"/>
    </source>
</evidence>
<evidence type="ECO:0000256" key="4">
    <source>
        <dbReference type="SAM" id="MobiDB-lite"/>
    </source>
</evidence>
<sequence length="430" mass="47235">MFVDQVKISLKAGDGGNGITAYRREKYVPFGGPAGGDGGKGASVVFEVDEGLRTLLDFRYQRHFKASKGENGQSSNMHGKNAEDLVLKVPPGTIIKNVETDEVLADLVEDGQRAVVAKGGRGGRGNSRFATPRNPAPDFSEKGEPGEELDVSLELKLLADVGLVGFPSVGKSTLLSIVSKAKPKIGAYHFTTIKPNLGVVSTPDQRSFVMADLPGLIEGASDGVGLGHQFLRHVERTKVIVHMIDMSGSEGREPIEDYKVINQELAAYEQRLEDRPQIVVANKMDLPESQDNLNLFKEEIGEDVPVIPVSTITRDNIDQLLYAIADKLEEYKDVDFTVEEEESVGINRVLYKHTPSQDKFTISRDDDGAYVVSGNAIERMFKMTDFNSDPAVRRFARQMRSMGIDDALRERGCKNGDIVRILGGEFEFVE</sequence>
<gene>
    <name evidence="1" type="primary">obg</name>
    <name type="ordered locus">USA300HOU_1643</name>
</gene>
<keyword id="KW-0963">Cytoplasm</keyword>
<keyword id="KW-0342">GTP-binding</keyword>
<keyword id="KW-0378">Hydrolase</keyword>
<keyword id="KW-0460">Magnesium</keyword>
<keyword id="KW-0479">Metal-binding</keyword>
<keyword id="KW-0547">Nucleotide-binding</keyword>
<proteinExistence type="inferred from homology"/>